<protein>
    <recommendedName>
        <fullName evidence="19">Polyphosphatidylinositol phosphatase INP53</fullName>
    </recommendedName>
    <alternativeName>
        <fullName>Suppressor of PMA1 protein 2</fullName>
    </alternativeName>
    <alternativeName>
        <fullName>Synaptojanin-like protein 3</fullName>
    </alternativeName>
    <domain>
        <recommendedName>
            <fullName>SAC1-like phosphoinositide phosphatase</fullName>
            <ecNumber>3.1.3.-</ecNumber>
        </recommendedName>
    </domain>
    <domain>
        <recommendedName>
            <fullName>Phosphatidylinositol 4,5-bisphosphate 5-phosphatase</fullName>
            <ecNumber evidence="5">3.1.3.36</ecNumber>
        </recommendedName>
    </domain>
</protein>
<name>INP53_YEAST</name>
<sequence length="1107" mass="124577">MIIFVSEEPERRLAIVSNLYALVLKPVGKKPSDKPLCAIELLQKNDLKKYGFKRLTSHEIFGVIGLIEVNGLLFVGAITGKSKVAQPCPGETVNKIFAVDFFCLNDNSWDFIEIDSSGYPVLPETASTEYQDALPKHPCYELKKLLSNGSFYYSSDFDLTSTLQHRGYGQHSLSTDTYEEEYMWNSFLMQEMITYRDHLDTNLKQILDDEGFLTTVIRGFAETFVSYVKKLKVALTIISKQSWKRAGTRFNARGVDDEANVANFVETEFIMYSSQYCYAFTQIRGSIPVFWEQGTSLINPRVQITRSFEATQPVFDKHIMKSVEKYGPVHVVNLLSTKSSEIELSKRYKEHLTHSKKLNFNKDIFLTEFDFHKETSQEGFSGVRKLIPLILDSLLSSGYYSYDVREKKNISEQHGIFRTNCLDCLDRTNLAQQIISLAAFRTFLEDFRLISSNSFIDDDDFVSKHNTLWADHGDQISQIYTGTNALKSSFSRKGKMSLAGALSDATKSVSRIYINNFMDKEKQQNIDTLLGRLPYQKAVQLYDPVNEYVSTKLQSMSDKFTSTSNINLLIGSFNVNGATKKVDLSKWLFPIGEKFKPDIVVLGLQEVIELSAGSILNADYSKSSFWENLVGDCLNQYDDKYLLLRVEQMTSLLILFFVKADKAKYVKQVEGATKKTGFRGMAGNKGAVSIRFEYGATSFCFVNSHLAAGATNVEERRSDYESIVRGITFTRTKMIPHHDSIFWLGDMNYRINLPNEDVRRELLNQEEGYIDKLLHFDQLTLGINSGSVFEGFKEPTLKFRPTYKYDPGTGTYDSSEKERTPSWTDRIIYKGENLLPLSYSDAPIMISDHRPVYAAYRAKITFVDDKERLSLKKRLFTEYKQEHPEEPGSLISDLLSLDLDNKSTDGFKSSSESSLLDIDPIMAQPTASSVASSSPVSSASASLQPVRTQNSSQSRTPIKKPVLRPPPPPAHKSVSAPAPSTSKEKSPTPQTSTASLSSVTKNIQENKPLAQNRRIPPPGFSQNILTPKSTSNLASPMSSKVDLYNSASESTRSAQDARQQTPTAFAASRDVNGQPEALLGDENPIEPEEKAKLNHMTLDSWQPLTPK</sequence>
<dbReference type="EC" id="3.1.3.-"/>
<dbReference type="EC" id="3.1.3.36" evidence="5"/>
<dbReference type="EMBL" id="X94335">
    <property type="protein sequence ID" value="CAA64029.1"/>
    <property type="molecule type" value="Genomic_DNA"/>
</dbReference>
<dbReference type="EMBL" id="Z75017">
    <property type="protein sequence ID" value="CAA99307.1"/>
    <property type="molecule type" value="Genomic_DNA"/>
</dbReference>
<dbReference type="EMBL" id="BK006948">
    <property type="protein sequence ID" value="DAA10884.1"/>
    <property type="molecule type" value="Genomic_DNA"/>
</dbReference>
<dbReference type="PIR" id="S61667">
    <property type="entry name" value="S61667"/>
</dbReference>
<dbReference type="RefSeq" id="NP_014752.3">
    <property type="nucleotide sequence ID" value="NM_001183528.3"/>
</dbReference>
<dbReference type="SMR" id="Q12271"/>
<dbReference type="BioGRID" id="34505">
    <property type="interactions" value="340"/>
</dbReference>
<dbReference type="DIP" id="DIP-2555N"/>
<dbReference type="FunCoup" id="Q12271">
    <property type="interactions" value="367"/>
</dbReference>
<dbReference type="IntAct" id="Q12271">
    <property type="interactions" value="20"/>
</dbReference>
<dbReference type="MINT" id="Q12271"/>
<dbReference type="STRING" id="4932.YOR109W"/>
<dbReference type="GlyGen" id="Q12271">
    <property type="glycosylation" value="4 sites, 1 O-linked glycan (4 sites)"/>
</dbReference>
<dbReference type="iPTMnet" id="Q12271"/>
<dbReference type="PaxDb" id="4932-YOR109W"/>
<dbReference type="PeptideAtlas" id="Q12271"/>
<dbReference type="EnsemblFungi" id="YOR109W_mRNA">
    <property type="protein sequence ID" value="YOR109W"/>
    <property type="gene ID" value="YOR109W"/>
</dbReference>
<dbReference type="GeneID" id="854276"/>
<dbReference type="KEGG" id="sce:YOR109W"/>
<dbReference type="AGR" id="SGD:S000005635"/>
<dbReference type="SGD" id="S000005635">
    <property type="gene designation" value="INP53"/>
</dbReference>
<dbReference type="VEuPathDB" id="FungiDB:YOR109W"/>
<dbReference type="eggNOG" id="KOG0566">
    <property type="taxonomic scope" value="Eukaryota"/>
</dbReference>
<dbReference type="GeneTree" id="ENSGT00940000170400"/>
<dbReference type="HOGENOM" id="CLU_003016_2_0_1"/>
<dbReference type="InParanoid" id="Q12271"/>
<dbReference type="OMA" id="ICQQRFY"/>
<dbReference type="OrthoDB" id="405996at2759"/>
<dbReference type="BioCyc" id="YEAST:YOR109W-MONOMER"/>
<dbReference type="Reactome" id="R-SCE-1660499">
    <property type="pathway name" value="Synthesis of PIPs at the plasma membrane"/>
</dbReference>
<dbReference type="Reactome" id="R-SCE-1855183">
    <property type="pathway name" value="Synthesis of IP2, IP, and Ins in the cytosol"/>
</dbReference>
<dbReference type="Reactome" id="R-SCE-1855204">
    <property type="pathway name" value="Synthesis of IP3 and IP4 in the cytosol"/>
</dbReference>
<dbReference type="BioGRID-ORCS" id="854276">
    <property type="hits" value="9 hits in 10 CRISPR screens"/>
</dbReference>
<dbReference type="PRO" id="PR:Q12271"/>
<dbReference type="Proteomes" id="UP000002311">
    <property type="component" value="Chromosome XV"/>
</dbReference>
<dbReference type="RNAct" id="Q12271">
    <property type="molecule type" value="protein"/>
</dbReference>
<dbReference type="GO" id="GO:0030479">
    <property type="term" value="C:actin cortical patch"/>
    <property type="evidence" value="ECO:0000314"/>
    <property type="project" value="SGD"/>
</dbReference>
<dbReference type="GO" id="GO:0005737">
    <property type="term" value="C:cytoplasm"/>
    <property type="evidence" value="ECO:0000314"/>
    <property type="project" value="SGD"/>
</dbReference>
<dbReference type="GO" id="GO:0016020">
    <property type="term" value="C:membrane"/>
    <property type="evidence" value="ECO:0000314"/>
    <property type="project" value="SGD"/>
</dbReference>
<dbReference type="GO" id="GO:0052658">
    <property type="term" value="F:inositol-1,4,5-trisphosphate 5-phosphatase activity"/>
    <property type="evidence" value="ECO:0000318"/>
    <property type="project" value="GO_Central"/>
</dbReference>
<dbReference type="GO" id="GO:0043813">
    <property type="term" value="F:phosphatidylinositol-3,5-bisphosphate 5-phosphatase activity"/>
    <property type="evidence" value="ECO:0000314"/>
    <property type="project" value="SGD"/>
</dbReference>
<dbReference type="GO" id="GO:0004438">
    <property type="term" value="F:phosphatidylinositol-3-phosphate phosphatase activity"/>
    <property type="evidence" value="ECO:0000314"/>
    <property type="project" value="SGD"/>
</dbReference>
<dbReference type="GO" id="GO:0004439">
    <property type="term" value="F:phosphatidylinositol-4,5-bisphosphate 5-phosphatase activity"/>
    <property type="evidence" value="ECO:0000314"/>
    <property type="project" value="SGD"/>
</dbReference>
<dbReference type="GO" id="GO:0043812">
    <property type="term" value="F:phosphatidylinositol-4-phosphate phosphatase activity"/>
    <property type="evidence" value="ECO:0000314"/>
    <property type="project" value="SGD"/>
</dbReference>
<dbReference type="GO" id="GO:0006897">
    <property type="term" value="P:endocytosis"/>
    <property type="evidence" value="ECO:0007669"/>
    <property type="project" value="UniProtKB-KW"/>
</dbReference>
<dbReference type="GO" id="GO:0046856">
    <property type="term" value="P:phosphatidylinositol dephosphorylation"/>
    <property type="evidence" value="ECO:0000314"/>
    <property type="project" value="SGD"/>
</dbReference>
<dbReference type="GO" id="GO:0015031">
    <property type="term" value="P:protein transport"/>
    <property type="evidence" value="ECO:0007669"/>
    <property type="project" value="UniProtKB-KW"/>
</dbReference>
<dbReference type="CDD" id="cd09090">
    <property type="entry name" value="INPP5c_ScInp51p-like"/>
    <property type="match status" value="1"/>
</dbReference>
<dbReference type="FunFam" id="3.60.10.10:FF:000029">
    <property type="entry name" value="Inositol polyphosphate 5-phosphatase"/>
    <property type="match status" value="1"/>
</dbReference>
<dbReference type="Gene3D" id="3.60.10.10">
    <property type="entry name" value="Endonuclease/exonuclease/phosphatase"/>
    <property type="match status" value="1"/>
</dbReference>
<dbReference type="InterPro" id="IPR036691">
    <property type="entry name" value="Endo/exonu/phosph_ase_sf"/>
</dbReference>
<dbReference type="InterPro" id="IPR046985">
    <property type="entry name" value="IP5"/>
</dbReference>
<dbReference type="InterPro" id="IPR000300">
    <property type="entry name" value="IPPc"/>
</dbReference>
<dbReference type="InterPro" id="IPR002013">
    <property type="entry name" value="SAC_dom"/>
</dbReference>
<dbReference type="PANTHER" id="PTHR11200">
    <property type="entry name" value="INOSITOL 5-PHOSPHATASE"/>
    <property type="match status" value="1"/>
</dbReference>
<dbReference type="PANTHER" id="PTHR11200:SF257">
    <property type="entry name" value="PHOSPHOINOSITIDE 5-PHOSPHATASE"/>
    <property type="match status" value="1"/>
</dbReference>
<dbReference type="Pfam" id="PF22669">
    <property type="entry name" value="Exo_endo_phos2"/>
    <property type="match status" value="1"/>
</dbReference>
<dbReference type="Pfam" id="PF02383">
    <property type="entry name" value="Syja_N"/>
    <property type="match status" value="1"/>
</dbReference>
<dbReference type="SMART" id="SM00128">
    <property type="entry name" value="IPPc"/>
    <property type="match status" value="1"/>
</dbReference>
<dbReference type="SUPFAM" id="SSF56219">
    <property type="entry name" value="DNase I-like"/>
    <property type="match status" value="1"/>
</dbReference>
<dbReference type="PROSITE" id="PS50275">
    <property type="entry name" value="SAC"/>
    <property type="match status" value="1"/>
</dbReference>
<evidence type="ECO:0000250" key="1">
    <source>
        <dbReference type="UniProtKB" id="P50942"/>
    </source>
</evidence>
<evidence type="ECO:0000255" key="2">
    <source>
        <dbReference type="PROSITE-ProRule" id="PRU00183"/>
    </source>
</evidence>
<evidence type="ECO:0000256" key="3">
    <source>
        <dbReference type="SAM" id="MobiDB-lite"/>
    </source>
</evidence>
<evidence type="ECO:0000269" key="4">
    <source>
    </source>
</evidence>
<evidence type="ECO:0000269" key="5">
    <source>
    </source>
</evidence>
<evidence type="ECO:0000269" key="6">
    <source>
    </source>
</evidence>
<evidence type="ECO:0000269" key="7">
    <source>
    </source>
</evidence>
<evidence type="ECO:0000269" key="8">
    <source>
    </source>
</evidence>
<evidence type="ECO:0000269" key="9">
    <source>
    </source>
</evidence>
<evidence type="ECO:0000269" key="10">
    <source>
    </source>
</evidence>
<evidence type="ECO:0000269" key="11">
    <source>
    </source>
</evidence>
<evidence type="ECO:0000269" key="12">
    <source>
    </source>
</evidence>
<evidence type="ECO:0000269" key="13">
    <source>
    </source>
</evidence>
<evidence type="ECO:0000269" key="14">
    <source>
    </source>
</evidence>
<evidence type="ECO:0000269" key="15">
    <source>
    </source>
</evidence>
<evidence type="ECO:0000269" key="16">
    <source>
    </source>
</evidence>
<evidence type="ECO:0000269" key="17">
    <source>
    </source>
</evidence>
<evidence type="ECO:0000269" key="18">
    <source>
    </source>
</evidence>
<evidence type="ECO:0000303" key="19">
    <source>
    </source>
</evidence>
<evidence type="ECO:0000305" key="20"/>
<evidence type="ECO:0000305" key="21">
    <source>
    </source>
</evidence>
<evidence type="ECO:0007744" key="22">
    <source>
    </source>
</evidence>
<evidence type="ECO:0007744" key="23">
    <source>
    </source>
</evidence>
<evidence type="ECO:0007744" key="24">
    <source>
    </source>
</evidence>
<organism>
    <name type="scientific">Saccharomyces cerevisiae (strain ATCC 204508 / S288c)</name>
    <name type="common">Baker's yeast</name>
    <dbReference type="NCBI Taxonomy" id="559292"/>
    <lineage>
        <taxon>Eukaryota</taxon>
        <taxon>Fungi</taxon>
        <taxon>Dikarya</taxon>
        <taxon>Ascomycota</taxon>
        <taxon>Saccharomycotina</taxon>
        <taxon>Saccharomycetes</taxon>
        <taxon>Saccharomycetales</taxon>
        <taxon>Saccharomycetaceae</taxon>
        <taxon>Saccharomyces</taxon>
    </lineage>
</organism>
<feature type="chain" id="PRO_0000268681" description="Polyphosphatidylinositol phosphatase INP53">
    <location>
        <begin position="1"/>
        <end position="1107"/>
    </location>
</feature>
<feature type="domain" description="SAC" evidence="2">
    <location>
        <begin position="142"/>
        <end position="482"/>
    </location>
</feature>
<feature type="region of interest" description="Disordered" evidence="3">
    <location>
        <begin position="926"/>
        <end position="1107"/>
    </location>
</feature>
<feature type="compositionally biased region" description="Low complexity" evidence="3">
    <location>
        <begin position="927"/>
        <end position="942"/>
    </location>
</feature>
<feature type="compositionally biased region" description="Polar residues" evidence="3">
    <location>
        <begin position="943"/>
        <end position="956"/>
    </location>
</feature>
<feature type="compositionally biased region" description="Polar residues" evidence="3">
    <location>
        <begin position="987"/>
        <end position="1005"/>
    </location>
</feature>
<feature type="compositionally biased region" description="Polar residues" evidence="3">
    <location>
        <begin position="1020"/>
        <end position="1038"/>
    </location>
</feature>
<feature type="compositionally biased region" description="Polar residues" evidence="3">
    <location>
        <begin position="1045"/>
        <end position="1063"/>
    </location>
</feature>
<feature type="compositionally biased region" description="Polar residues" evidence="3">
    <location>
        <begin position="1097"/>
        <end position="1107"/>
    </location>
</feature>
<feature type="modified residue" description="Phosphoserine" evidence="1">
    <location>
        <position position="497"/>
    </location>
</feature>
<feature type="modified residue" description="Phosphoserine" evidence="24">
    <location>
        <position position="986"/>
    </location>
</feature>
<feature type="modified residue" description="Phosphoserine" evidence="23">
    <location>
        <position position="1035"/>
    </location>
</feature>
<feature type="modified residue" description="Phosphothreonine" evidence="22 24">
    <location>
        <position position="1105"/>
    </location>
</feature>
<feature type="mutagenesis site" description="Reduces hydrolysis of PtdIns(4)P; when associated with A-424 and A-427." evidence="11">
    <original>C</original>
    <variation>A</variation>
    <location>
        <position position="421"/>
    </location>
</feature>
<feature type="mutagenesis site" description="Reduces hydrolysis of PtdIns(4)P; when associated with A-421 and A-427." evidence="11">
    <original>C</original>
    <variation>A</variation>
    <location>
        <position position="424"/>
    </location>
</feature>
<feature type="mutagenesis site" description="Reduces hydrolysis of PtdIns(4)P; when associated with A-421 and A-424." evidence="11">
    <original>R</original>
    <variation>A</variation>
    <location>
        <position position="427"/>
    </location>
</feature>
<feature type="mutagenesis site" description="Abolishes hydrolysis of PtdIns(4,5)P2; when associated with A-748." evidence="11">
    <original>D</original>
    <variation>A</variation>
    <location>
        <position position="746"/>
    </location>
</feature>
<feature type="mutagenesis site" description="Abolishes hydrolysis of PtdIns(4,5)P2; when associated with A-746." evidence="11">
    <original>N</original>
    <variation>A</variation>
    <location>
        <position position="748"/>
    </location>
</feature>
<proteinExistence type="evidence at protein level"/>
<comment type="function">
    <text evidence="4 5 6 7 8 9 11 14 15 16 17 18">Dephosphorylates a number of phosphatidylinositols (PIs) like phosphatidylinositol 4,5-bisphosphate (PtdIns(4,5)P2), but also phosphatidylinositol 3-phosphate (PtdIns(3)P), phosphatidylinositol 4-phosphate (PtdIns(4)P), and phosphatidylinositol 3,5-bisphosphate (PtdIns(3,5)P2). Controls the cellular levels and subcellular distribution of phosphatidylinositol 3-phosphate and phosphatidylinositol 4,5-bisphosphate. Plays an essential role in a TGN (trans Golgi network)-to-early endosome pathway. Involved in clathrin-mediated protein sorting at the TGN.</text>
</comment>
<comment type="catalytic activity">
    <reaction evidence="5">
        <text>a 1,2-diacyl-sn-glycero-3-phospho-(1D-myo-inositol-4,5-bisphosphate) + H2O = a 1,2-diacyl-sn-glycero-3-phospho-(1D-myo-inositol 4-phosphate) + phosphate</text>
        <dbReference type="Rhea" id="RHEA:22764"/>
        <dbReference type="ChEBI" id="CHEBI:15377"/>
        <dbReference type="ChEBI" id="CHEBI:43474"/>
        <dbReference type="ChEBI" id="CHEBI:58178"/>
        <dbReference type="ChEBI" id="CHEBI:58456"/>
        <dbReference type="EC" id="3.1.3.36"/>
    </reaction>
    <physiologicalReaction direction="left-to-right" evidence="21">
        <dbReference type="Rhea" id="RHEA:22765"/>
    </physiologicalReaction>
</comment>
<comment type="subunit">
    <text evidence="10 11">Interacts (via SAC domain) with BSP1; the interaction is direct (PubMed:12606027). Interacts with CHC1 (PubMed:12686590).</text>
</comment>
<comment type="subcellular location">
    <subcellularLocation>
        <location evidence="8 12">Cytoplasm</location>
    </subcellularLocation>
    <text>Cytoplasmic punctate structures. Hyperosmotic stress causes translocation to actin patches.</text>
</comment>
<comment type="domain">
    <text>The SAC domain is capable of hydrolyzing phosphatidylinositol 3-phosphate (PtdIns(3)P), phosphatidylinositol 4-phosphate (PtdIns(4)P), and phosphatidylinositol 3,5-bisphosphate (PtdIns(3,5)P2).</text>
</comment>
<comment type="domain">
    <text>The 5-phosphatase domain (residues 568 to 856) selectively removes the phosphate group at the 5' position of inositol of phosphatidylinositol 4,5-bisphosphate (PtdIns(4,5)P2).</text>
</comment>
<comment type="domain">
    <text>The C-terminal proline-rich domain is required for the function and associates with clathrin heavy chain CHC1.</text>
</comment>
<comment type="miscellaneous">
    <text evidence="13">Present with 1520 molecules/cell in log phase SD medium.</text>
</comment>
<comment type="similarity">
    <text evidence="20">Belongs to the synaptojanin family.</text>
</comment>
<comment type="similarity">
    <text evidence="20">In the central section; belongs to the inositol 1,4,5-trisphosphate 5-phosphatase family.</text>
</comment>
<keyword id="KW-0963">Cytoplasm</keyword>
<keyword id="KW-0254">Endocytosis</keyword>
<keyword id="KW-0378">Hydrolase</keyword>
<keyword id="KW-0597">Phosphoprotein</keyword>
<keyword id="KW-0653">Protein transport</keyword>
<keyword id="KW-1185">Reference proteome</keyword>
<keyword id="KW-0813">Transport</keyword>
<gene>
    <name type="primary">INP53</name>
    <name type="synonym">SJL3</name>
    <name type="synonym">SOP2</name>
    <name type="ordered locus">YOR109W</name>
    <name type="ORF">YOR3231w</name>
</gene>
<accession>Q12271</accession>
<accession>D6W2G8</accession>
<reference key="1">
    <citation type="journal article" date="1997" name="Yeast">
        <title>DNA sequencing and analysis of 130 kb from yeast chromosome XV.</title>
        <authorList>
            <person name="Voss H."/>
            <person name="Benes V."/>
            <person name="Andrade M.A."/>
            <person name="Valencia A."/>
            <person name="Rechmann S."/>
            <person name="Teodoru C."/>
            <person name="Schwager C."/>
            <person name="Paces V."/>
            <person name="Sander C."/>
            <person name="Ansorge W."/>
        </authorList>
    </citation>
    <scope>NUCLEOTIDE SEQUENCE [GENOMIC DNA]</scope>
</reference>
<reference key="2">
    <citation type="journal article" date="1997" name="Nature">
        <title>The nucleotide sequence of Saccharomyces cerevisiae chromosome XV.</title>
        <authorList>
            <person name="Dujon B."/>
            <person name="Albermann K."/>
            <person name="Aldea M."/>
            <person name="Alexandraki D."/>
            <person name="Ansorge W."/>
            <person name="Arino J."/>
            <person name="Benes V."/>
            <person name="Bohn C."/>
            <person name="Bolotin-Fukuhara M."/>
            <person name="Bordonne R."/>
            <person name="Boyer J."/>
            <person name="Camasses A."/>
            <person name="Casamayor A."/>
            <person name="Casas C."/>
            <person name="Cheret G."/>
            <person name="Cziepluch C."/>
            <person name="Daignan-Fornier B."/>
            <person name="Dang V.-D."/>
            <person name="de Haan M."/>
            <person name="Delius H."/>
            <person name="Durand P."/>
            <person name="Fairhead C."/>
            <person name="Feldmann H."/>
            <person name="Gaillon L."/>
            <person name="Galisson F."/>
            <person name="Gamo F.-J."/>
            <person name="Gancedo C."/>
            <person name="Goffeau A."/>
            <person name="Goulding S.E."/>
            <person name="Grivell L.A."/>
            <person name="Habbig B."/>
            <person name="Hand N.J."/>
            <person name="Hani J."/>
            <person name="Hattenhorst U."/>
            <person name="Hebling U."/>
            <person name="Hernando Y."/>
            <person name="Herrero E."/>
            <person name="Heumann K."/>
            <person name="Hiesel R."/>
            <person name="Hilger F."/>
            <person name="Hofmann B."/>
            <person name="Hollenberg C.P."/>
            <person name="Hughes B."/>
            <person name="Jauniaux J.-C."/>
            <person name="Kalogeropoulos A."/>
            <person name="Katsoulou C."/>
            <person name="Kordes E."/>
            <person name="Lafuente M.J."/>
            <person name="Landt O."/>
            <person name="Louis E.J."/>
            <person name="Maarse A.C."/>
            <person name="Madania A."/>
            <person name="Mannhaupt G."/>
            <person name="Marck C."/>
            <person name="Martin R.P."/>
            <person name="Mewes H.-W."/>
            <person name="Michaux G."/>
            <person name="Paces V."/>
            <person name="Parle-McDermott A.G."/>
            <person name="Pearson B.M."/>
            <person name="Perrin A."/>
            <person name="Pettersson B."/>
            <person name="Poch O."/>
            <person name="Pohl T.M."/>
            <person name="Poirey R."/>
            <person name="Portetelle D."/>
            <person name="Pujol A."/>
            <person name="Purnelle B."/>
            <person name="Ramezani Rad M."/>
            <person name="Rechmann S."/>
            <person name="Schwager C."/>
            <person name="Schweizer M."/>
            <person name="Sor F."/>
            <person name="Sterky F."/>
            <person name="Tarassov I.A."/>
            <person name="Teodoru C."/>
            <person name="Tettelin H."/>
            <person name="Thierry A."/>
            <person name="Tobiasch E."/>
            <person name="Tzermia M."/>
            <person name="Uhlen M."/>
            <person name="Unseld M."/>
            <person name="Valens M."/>
            <person name="Vandenbol M."/>
            <person name="Vetter I."/>
            <person name="Vlcek C."/>
            <person name="Voet M."/>
            <person name="Volckaert G."/>
            <person name="Voss H."/>
            <person name="Wambutt R."/>
            <person name="Wedler H."/>
            <person name="Wiemann S."/>
            <person name="Winsor B."/>
            <person name="Wolfe K.H."/>
            <person name="Zollner A."/>
            <person name="Zumstein E."/>
            <person name="Kleine K."/>
        </authorList>
    </citation>
    <scope>NUCLEOTIDE SEQUENCE [LARGE SCALE GENOMIC DNA]</scope>
    <source>
        <strain>ATCC 204508 / S288c</strain>
    </source>
</reference>
<reference key="3">
    <citation type="journal article" date="2014" name="G3 (Bethesda)">
        <title>The reference genome sequence of Saccharomyces cerevisiae: Then and now.</title>
        <authorList>
            <person name="Engel S.R."/>
            <person name="Dietrich F.S."/>
            <person name="Fisk D.G."/>
            <person name="Binkley G."/>
            <person name="Balakrishnan R."/>
            <person name="Costanzo M.C."/>
            <person name="Dwight S.S."/>
            <person name="Hitz B.C."/>
            <person name="Karra K."/>
            <person name="Nash R.S."/>
            <person name="Weng S."/>
            <person name="Wong E.D."/>
            <person name="Lloyd P."/>
            <person name="Skrzypek M.S."/>
            <person name="Miyasato S.R."/>
            <person name="Simison M."/>
            <person name="Cherry J.M."/>
        </authorList>
    </citation>
    <scope>GENOME REANNOTATION</scope>
    <source>
        <strain>ATCC 204508 / S288c</strain>
    </source>
</reference>
<reference key="4">
    <citation type="journal article" date="1997" name="J. Cell Biol.">
        <title>Novel genes involved in endosomal traffic in yeast revealed by suppression of a targeting-defective plasma membrane ATPase mutant.</title>
        <authorList>
            <person name="Luo W.-J."/>
            <person name="Chang A."/>
        </authorList>
    </citation>
    <scope>FUNCTION</scope>
</reference>
<reference key="5">
    <citation type="journal article" date="1998" name="Genetics">
        <title>Identification and characterization of an essential family of inositol polyphosphate 5-phosphatases (INP51, INP52 and INP53 gene products) in the yeast Saccharomyces cerevisiae.</title>
        <authorList>
            <person name="Stolz L.E."/>
            <person name="Huynh C.V."/>
            <person name="Thorner J."/>
            <person name="York J.D."/>
        </authorList>
    </citation>
    <scope>FUNCTION</scope>
</reference>
<reference key="6">
    <citation type="journal article" date="1998" name="J. Cell Sci.">
        <title>Synaptojanin family members are implicated in endocytic membrane traffic in yeast.</title>
        <authorList>
            <person name="Singer-Krueger B."/>
            <person name="Nemoto Y."/>
            <person name="Daniell L."/>
            <person name="Ferro-Novick S."/>
            <person name="De Camilli P."/>
        </authorList>
    </citation>
    <scope>FUNCTION</scope>
</reference>
<reference key="7">
    <citation type="journal article" date="1999" name="J. Biol. Chem.">
        <title>SAC1-like domains of yeast SAC1, INP52, and INP53 and of human synaptojanin encode polyphosphoinositide phosphatases.</title>
        <authorList>
            <person name="Guo S."/>
            <person name="Stolz L.E."/>
            <person name="Lemrow S.M."/>
            <person name="York J.D."/>
        </authorList>
    </citation>
    <scope>FUNCTION</scope>
    <scope>DOMAIN</scope>
    <scope>CATALYTIC ACTIVITY</scope>
</reference>
<reference key="8">
    <citation type="journal article" date="1999" name="Yeast">
        <title>Disruption of six unknown open reading frames from Saccharomyces cerevisiae reveals two genes involved in vacuolar morphogenesis and one gene required for sporulation.</title>
        <authorList>
            <person name="Saiz J.E."/>
            <person name="de Los Angeles Santos M."/>
            <person name="Vazquez de Aldana C.R."/>
            <person name="Revuelta J.L."/>
        </authorList>
    </citation>
    <scope>FUNCTION</scope>
</reference>
<reference key="9">
    <citation type="journal article" date="2000" name="Genetics">
        <title>Synthetic genetic interactions with temperature-sensitive clathrin in Saccharomyces cerevisiae. Roles for synaptojanin-like Inp53p and dynamin-related Vps1p in clathrin-dependent protein sorting at the trans-Golgi network.</title>
        <authorList>
            <person name="Bensen E.S."/>
            <person name="Costaguta G."/>
            <person name="Payne G.S."/>
        </authorList>
    </citation>
    <scope>FUNCTION</scope>
</reference>
<reference key="10">
    <citation type="journal article" date="2000" name="J. Biol. Chem.">
        <title>SAC1 encodes a regulated lipid phosphoinositide phosphatase, defects in which can be suppressed by the homologous Inp52p and Inp53p phosphatases.</title>
        <authorList>
            <person name="Hughes W.E."/>
            <person name="Woscholski R."/>
            <person name="Cooke F.T."/>
            <person name="Patrick R.S."/>
            <person name="Dove S.K."/>
            <person name="McDonald N.Q."/>
            <person name="Parker P.J."/>
        </authorList>
    </citation>
    <scope>FUNCTION</scope>
</reference>
<reference key="11">
    <citation type="journal article" date="2000" name="Mol. Cell. Biol.">
        <title>The yeast inositol polyphosphate 5-phosphatases inp52p and inp53p translocate to actin patches following hyperosmotic stress: mechanism for regulating phosphatidylinositol 4,5-bisphosphate at plasma membrane invaginations.</title>
        <authorList>
            <person name="Ooms L.M."/>
            <person name="McColl B.K."/>
            <person name="Wiradjaja F."/>
            <person name="Wijayaratnam A.P.W."/>
            <person name="Gleeson P."/>
            <person name="Gething M.J."/>
            <person name="Sambrook J.F."/>
            <person name="Mitchell C.A."/>
        </authorList>
    </citation>
    <scope>FUNCTION</scope>
    <scope>DOMAIN</scope>
    <scope>SUBCELLULAR LOCATION</scope>
</reference>
<reference key="12">
    <citation type="journal article" date="2001" name="Mol. Biol. Cell">
        <title>A novel mechanism for localizing membrane proteins to yeast trans-Golgi network requires function of synaptojanin-like protein.</title>
        <authorList>
            <person name="Ha S.-A."/>
            <person name="Bunch J.T."/>
            <person name="Hama H."/>
            <person name="DeWald D.B."/>
            <person name="Nothwehr S.F."/>
        </authorList>
    </citation>
    <scope>FUNCTION</scope>
</reference>
<reference key="13">
    <citation type="journal article" date="2003" name="FEBS Lett.">
        <title>Bsp1p/Ypr171p is an adapter that directly links some synaptojanin family members to the cortical actin cytoskeleton in yeast.</title>
        <authorList>
            <person name="Wicky S."/>
            <person name="Frischmuth S."/>
            <person name="Singer-Krueger B."/>
        </authorList>
    </citation>
    <scope>INTERACTION WITH BSP1</scope>
</reference>
<reference key="14">
    <citation type="journal article" date="2003" name="Mol. Biol. Cell">
        <title>The synaptojanin-like protein Inp53/Sjl3 functions with clathrin in a yeast TGN-to-endosome pathway distinct from the GGA protein-dependent pathway.</title>
        <authorList>
            <person name="Ha S.-A."/>
            <person name="Torabinejad J."/>
            <person name="DeWald D.B."/>
            <person name="Wenk M.R."/>
            <person name="Lucast L."/>
            <person name="De Camilli P."/>
            <person name="Newitt R.A."/>
            <person name="Aebersold R."/>
            <person name="Nothwehr S.F."/>
        </authorList>
    </citation>
    <scope>FUNCTION</scope>
    <scope>DOMAINS</scope>
    <scope>MUTAGENESIS OF CYS-421; CYS-424; ARG-427; ASP-746 AND ASN-748</scope>
    <scope>INTERACTION WITH CHC1</scope>
</reference>
<reference key="15">
    <citation type="journal article" date="2003" name="Nature">
        <title>Global analysis of protein localization in budding yeast.</title>
        <authorList>
            <person name="Huh W.-K."/>
            <person name="Falvo J.V."/>
            <person name="Gerke L.C."/>
            <person name="Carroll A.S."/>
            <person name="Howson R.W."/>
            <person name="Weissman J.S."/>
            <person name="O'Shea E.K."/>
        </authorList>
    </citation>
    <scope>SUBCELLULAR LOCATION [LARGE SCALE ANALYSIS]</scope>
</reference>
<reference key="16">
    <citation type="journal article" date="2003" name="Nature">
        <title>Global analysis of protein expression in yeast.</title>
        <authorList>
            <person name="Ghaemmaghami S."/>
            <person name="Huh W.-K."/>
            <person name="Bower K."/>
            <person name="Howson R.W."/>
            <person name="Belle A."/>
            <person name="Dephoure N."/>
            <person name="O'Shea E.K."/>
            <person name="Weissman J.S."/>
        </authorList>
    </citation>
    <scope>LEVEL OF PROTEIN EXPRESSION [LARGE SCALE ANALYSIS]</scope>
</reference>
<reference key="17">
    <citation type="journal article" date="2004" name="Mol. Biol. Cell">
        <title>Essential role for the myotubularin-related phosphatase Ymr1p and the synaptojanin-like phosphatases Sjl2p and Sjl3p in regulation of phosphatidylinositol 3-phosphate in yeast.</title>
        <authorList>
            <person name="Parrish W.R."/>
            <person name="Stefan C.J."/>
            <person name="Emr S.D."/>
        </authorList>
    </citation>
    <scope>FUNCTION</scope>
</reference>
<reference key="18">
    <citation type="journal article" date="2005" name="FEMS Yeast Res.">
        <title>Interaction of Pik1p and Sjl proteins in membrane trafficking.</title>
        <authorList>
            <person name="Nguyen P.H."/>
            <person name="Hasek J."/>
            <person name="Kohlwein S.D."/>
            <person name="Romero C."/>
            <person name="Choi J.H."/>
            <person name="Vancura A."/>
        </authorList>
    </citation>
    <scope>FUNCTION</scope>
</reference>
<reference key="19">
    <citation type="journal article" date="2007" name="J. Proteome Res.">
        <title>Large-scale phosphorylation analysis of alpha-factor-arrested Saccharomyces cerevisiae.</title>
        <authorList>
            <person name="Li X."/>
            <person name="Gerber S.A."/>
            <person name="Rudner A.D."/>
            <person name="Beausoleil S.A."/>
            <person name="Haas W."/>
            <person name="Villen J."/>
            <person name="Elias J.E."/>
            <person name="Gygi S.P."/>
        </authorList>
    </citation>
    <scope>PHOSPHORYLATION [LARGE SCALE ANALYSIS] AT THR-1105</scope>
    <scope>IDENTIFICATION BY MASS SPECTROMETRY [LARGE SCALE ANALYSIS]</scope>
    <source>
        <strain>ADR376</strain>
    </source>
</reference>
<reference key="20">
    <citation type="journal article" date="2008" name="Mol. Cell. Proteomics">
        <title>A multidimensional chromatography technology for in-depth phosphoproteome analysis.</title>
        <authorList>
            <person name="Albuquerque C.P."/>
            <person name="Smolka M.B."/>
            <person name="Payne S.H."/>
            <person name="Bafna V."/>
            <person name="Eng J."/>
            <person name="Zhou H."/>
        </authorList>
    </citation>
    <scope>PHOSPHORYLATION [LARGE SCALE ANALYSIS] AT SER-1035</scope>
    <scope>IDENTIFICATION BY MASS SPECTROMETRY [LARGE SCALE ANALYSIS]</scope>
</reference>
<reference key="21">
    <citation type="journal article" date="2009" name="Science">
        <title>Global analysis of Cdk1 substrate phosphorylation sites provides insights into evolution.</title>
        <authorList>
            <person name="Holt L.J."/>
            <person name="Tuch B.B."/>
            <person name="Villen J."/>
            <person name="Johnson A.D."/>
            <person name="Gygi S.P."/>
            <person name="Morgan D.O."/>
        </authorList>
    </citation>
    <scope>PHOSPHORYLATION [LARGE SCALE ANALYSIS] AT SER-986 AND THR-1105</scope>
    <scope>IDENTIFICATION BY MASS SPECTROMETRY [LARGE SCALE ANALYSIS]</scope>
</reference>
<reference key="22">
    <citation type="journal article" date="2012" name="Proc. Natl. Acad. Sci. U.S.A.">
        <title>N-terminal acetylome analyses and functional insights of the N-terminal acetyltransferase NatB.</title>
        <authorList>
            <person name="Van Damme P."/>
            <person name="Lasa M."/>
            <person name="Polevoda B."/>
            <person name="Gazquez C."/>
            <person name="Elosegui-Artola A."/>
            <person name="Kim D.S."/>
            <person name="De Juan-Pardo E."/>
            <person name="Demeyer K."/>
            <person name="Hole K."/>
            <person name="Larrea E."/>
            <person name="Timmerman E."/>
            <person name="Prieto J."/>
            <person name="Arnesen T."/>
            <person name="Sherman F."/>
            <person name="Gevaert K."/>
            <person name="Aldabe R."/>
        </authorList>
    </citation>
    <scope>IDENTIFICATION BY MASS SPECTROMETRY [LARGE SCALE ANALYSIS]</scope>
</reference>